<feature type="chain" id="PRO_1000136280" description="Crotonobetainyl-CoA reductase">
    <location>
        <begin position="1"/>
        <end position="380"/>
    </location>
</feature>
<proteinExistence type="inferred from homology"/>
<gene>
    <name evidence="1" type="primary">caiA</name>
    <name type="ordered locus">SEN0074</name>
</gene>
<protein>
    <recommendedName>
        <fullName evidence="1">Crotonobetainyl-CoA reductase</fullName>
        <ecNumber evidence="1">1.3.8.13</ecNumber>
    </recommendedName>
    <alternativeName>
        <fullName evidence="1">Crotonobetainyl-CoA dehydrogenase</fullName>
    </alternativeName>
</protein>
<evidence type="ECO:0000255" key="1">
    <source>
        <dbReference type="HAMAP-Rule" id="MF_01052"/>
    </source>
</evidence>
<accession>B5R1R2</accession>
<comment type="function">
    <text evidence="1">Catalyzes the reduction of crotonobetainyl-CoA to gamma-butyrobetainyl-CoA.</text>
</comment>
<comment type="catalytic activity">
    <reaction evidence="1">
        <text>4-(trimethylamino)butanoyl-CoA + oxidized [electron-transfer flavoprotein] + H(+) = crotonobetainyl-CoA + reduced [electron-transfer flavoprotein]</text>
        <dbReference type="Rhea" id="RHEA:51584"/>
        <dbReference type="Rhea" id="RHEA-COMP:10685"/>
        <dbReference type="Rhea" id="RHEA-COMP:10686"/>
        <dbReference type="ChEBI" id="CHEBI:15378"/>
        <dbReference type="ChEBI" id="CHEBI:57692"/>
        <dbReference type="ChEBI" id="CHEBI:58307"/>
        <dbReference type="ChEBI" id="CHEBI:60933"/>
        <dbReference type="ChEBI" id="CHEBI:61513"/>
        <dbReference type="EC" id="1.3.8.13"/>
    </reaction>
</comment>
<comment type="cofactor">
    <cofactor evidence="1">
        <name>FAD</name>
        <dbReference type="ChEBI" id="CHEBI:57692"/>
    </cofactor>
</comment>
<comment type="pathway">
    <text evidence="1">Amine and polyamine metabolism; carnitine metabolism.</text>
</comment>
<comment type="subunit">
    <text evidence="1">Homotetramer.</text>
</comment>
<comment type="subcellular location">
    <subcellularLocation>
        <location evidence="1">Cytoplasm</location>
    </subcellularLocation>
</comment>
<comment type="similarity">
    <text evidence="1">Belongs to the acyl-CoA dehydrogenase family.</text>
</comment>
<name>CAIA_SALEP</name>
<keyword id="KW-0963">Cytoplasm</keyword>
<keyword id="KW-0274">FAD</keyword>
<keyword id="KW-0285">Flavoprotein</keyword>
<keyword id="KW-0560">Oxidoreductase</keyword>
<reference key="1">
    <citation type="journal article" date="2008" name="Genome Res.">
        <title>Comparative genome analysis of Salmonella enteritidis PT4 and Salmonella gallinarum 287/91 provides insights into evolutionary and host adaptation pathways.</title>
        <authorList>
            <person name="Thomson N.R."/>
            <person name="Clayton D.J."/>
            <person name="Windhorst D."/>
            <person name="Vernikos G."/>
            <person name="Davidson S."/>
            <person name="Churcher C."/>
            <person name="Quail M.A."/>
            <person name="Stevens M."/>
            <person name="Jones M.A."/>
            <person name="Watson M."/>
            <person name="Barron A."/>
            <person name="Layton A."/>
            <person name="Pickard D."/>
            <person name="Kingsley R.A."/>
            <person name="Bignell A."/>
            <person name="Clark L."/>
            <person name="Harris B."/>
            <person name="Ormond D."/>
            <person name="Abdellah Z."/>
            <person name="Brooks K."/>
            <person name="Cherevach I."/>
            <person name="Chillingworth T."/>
            <person name="Woodward J."/>
            <person name="Norberczak H."/>
            <person name="Lord A."/>
            <person name="Arrowsmith C."/>
            <person name="Jagels K."/>
            <person name="Moule S."/>
            <person name="Mungall K."/>
            <person name="Saunders M."/>
            <person name="Whitehead S."/>
            <person name="Chabalgoity J.A."/>
            <person name="Maskell D."/>
            <person name="Humphreys T."/>
            <person name="Roberts M."/>
            <person name="Barrow P.A."/>
            <person name="Dougan G."/>
            <person name="Parkhill J."/>
        </authorList>
    </citation>
    <scope>NUCLEOTIDE SEQUENCE [LARGE SCALE GENOMIC DNA]</scope>
    <source>
        <strain>P125109</strain>
    </source>
</reference>
<sequence length="380" mass="42481">MDFNLNDEQELFVAGIRELMASENWEAYFAECDRDSVYPERFVKALADMGIDSLLIPEEHGGLEAGFVTVAAVWMELGRLGAPTYVLYQLPGGFNTFLREGTQEQIDKIMAFRGTGKQMWNSAITEPGAGSDVGSLKTTYTRKNGKVYLNGSKCFITSSAYTPYIVVMARDGASPDKPVYTEWFVDMSKAGIKVNKLEKLGLRMDSCCEITFDDVELDEKDMFGREGNGFNRVKEEFDHERFLVALTNYGTAMCAFEDAARYANQRVQFGEAIGRFQLIQEKFAHMAIKLNSMKNMLLEAAWKADNGTITSGDAAMCKYFCANAAFEVVDTAMQVLGGVGIAGNHRITRFWRDLRVDRVSGGSDEMQILTLGRAVLKQYR</sequence>
<organism>
    <name type="scientific">Salmonella enteritidis PT4 (strain P125109)</name>
    <dbReference type="NCBI Taxonomy" id="550537"/>
    <lineage>
        <taxon>Bacteria</taxon>
        <taxon>Pseudomonadati</taxon>
        <taxon>Pseudomonadota</taxon>
        <taxon>Gammaproteobacteria</taxon>
        <taxon>Enterobacterales</taxon>
        <taxon>Enterobacteriaceae</taxon>
        <taxon>Salmonella</taxon>
    </lineage>
</organism>
<dbReference type="EC" id="1.3.8.13" evidence="1"/>
<dbReference type="EMBL" id="AM933172">
    <property type="protein sequence ID" value="CAR31663.1"/>
    <property type="molecule type" value="Genomic_DNA"/>
</dbReference>
<dbReference type="RefSeq" id="WP_000347134.1">
    <property type="nucleotide sequence ID" value="NC_011294.1"/>
</dbReference>
<dbReference type="SMR" id="B5R1R2"/>
<dbReference type="GeneID" id="44979088"/>
<dbReference type="KEGG" id="set:SEN0074"/>
<dbReference type="HOGENOM" id="CLU_018204_0_2_6"/>
<dbReference type="UniPathway" id="UPA00117"/>
<dbReference type="Proteomes" id="UP000000613">
    <property type="component" value="Chromosome"/>
</dbReference>
<dbReference type="GO" id="GO:0005737">
    <property type="term" value="C:cytoplasm"/>
    <property type="evidence" value="ECO:0007669"/>
    <property type="project" value="UniProtKB-SubCell"/>
</dbReference>
<dbReference type="GO" id="GO:0003995">
    <property type="term" value="F:acyl-CoA dehydrogenase activity"/>
    <property type="evidence" value="ECO:0007669"/>
    <property type="project" value="InterPro"/>
</dbReference>
<dbReference type="GO" id="GO:0050660">
    <property type="term" value="F:flavin adenine dinucleotide binding"/>
    <property type="evidence" value="ECO:0007669"/>
    <property type="project" value="InterPro"/>
</dbReference>
<dbReference type="GO" id="GO:0009437">
    <property type="term" value="P:carnitine metabolic process"/>
    <property type="evidence" value="ECO:0007669"/>
    <property type="project" value="UniProtKB-UniRule"/>
</dbReference>
<dbReference type="CDD" id="cd00567">
    <property type="entry name" value="ACAD"/>
    <property type="match status" value="1"/>
</dbReference>
<dbReference type="FunFam" id="1.20.140.10:FF:000001">
    <property type="entry name" value="Acyl-CoA dehydrogenase"/>
    <property type="match status" value="1"/>
</dbReference>
<dbReference type="FunFam" id="2.40.110.10:FF:000002">
    <property type="entry name" value="Acyl-CoA dehydrogenase fadE12"/>
    <property type="match status" value="1"/>
</dbReference>
<dbReference type="FunFam" id="1.10.540.10:FF:000005">
    <property type="entry name" value="Crotonobetainyl-CoA reductase"/>
    <property type="match status" value="1"/>
</dbReference>
<dbReference type="Gene3D" id="1.10.540.10">
    <property type="entry name" value="Acyl-CoA dehydrogenase/oxidase, N-terminal domain"/>
    <property type="match status" value="1"/>
</dbReference>
<dbReference type="Gene3D" id="2.40.110.10">
    <property type="entry name" value="Butyryl-CoA Dehydrogenase, subunit A, domain 2"/>
    <property type="match status" value="1"/>
</dbReference>
<dbReference type="Gene3D" id="1.20.140.10">
    <property type="entry name" value="Butyryl-CoA Dehydrogenase, subunit A, domain 3"/>
    <property type="match status" value="1"/>
</dbReference>
<dbReference type="HAMAP" id="MF_01052">
    <property type="entry name" value="CaiA"/>
    <property type="match status" value="1"/>
</dbReference>
<dbReference type="InterPro" id="IPR006089">
    <property type="entry name" value="Acyl-CoA_DH_CS"/>
</dbReference>
<dbReference type="InterPro" id="IPR006091">
    <property type="entry name" value="Acyl-CoA_Oxase/DH_mid-dom"/>
</dbReference>
<dbReference type="InterPro" id="IPR046373">
    <property type="entry name" value="Acyl-CoA_Oxase/DH_mid-dom_sf"/>
</dbReference>
<dbReference type="InterPro" id="IPR036250">
    <property type="entry name" value="AcylCo_DH-like_C"/>
</dbReference>
<dbReference type="InterPro" id="IPR009075">
    <property type="entry name" value="AcylCo_DH/oxidase_C"/>
</dbReference>
<dbReference type="InterPro" id="IPR013786">
    <property type="entry name" value="AcylCoA_DH/ox_N"/>
</dbReference>
<dbReference type="InterPro" id="IPR037069">
    <property type="entry name" value="AcylCoA_DH/ox_N_sf"/>
</dbReference>
<dbReference type="InterPro" id="IPR009100">
    <property type="entry name" value="AcylCoA_DH/oxidase_NM_dom_sf"/>
</dbReference>
<dbReference type="InterPro" id="IPR023450">
    <property type="entry name" value="CaiA"/>
</dbReference>
<dbReference type="NCBIfam" id="NF002885">
    <property type="entry name" value="PRK03354.1"/>
    <property type="match status" value="1"/>
</dbReference>
<dbReference type="PANTHER" id="PTHR43884">
    <property type="entry name" value="ACYL-COA DEHYDROGENASE"/>
    <property type="match status" value="1"/>
</dbReference>
<dbReference type="PANTHER" id="PTHR43884:SF12">
    <property type="entry name" value="ISOVALERYL-COA DEHYDROGENASE, MITOCHONDRIAL-RELATED"/>
    <property type="match status" value="1"/>
</dbReference>
<dbReference type="Pfam" id="PF00441">
    <property type="entry name" value="Acyl-CoA_dh_1"/>
    <property type="match status" value="1"/>
</dbReference>
<dbReference type="Pfam" id="PF02770">
    <property type="entry name" value="Acyl-CoA_dh_M"/>
    <property type="match status" value="1"/>
</dbReference>
<dbReference type="Pfam" id="PF02771">
    <property type="entry name" value="Acyl-CoA_dh_N"/>
    <property type="match status" value="1"/>
</dbReference>
<dbReference type="PIRSF" id="PIRSF016578">
    <property type="entry name" value="HsaA"/>
    <property type="match status" value="1"/>
</dbReference>
<dbReference type="SUPFAM" id="SSF47203">
    <property type="entry name" value="Acyl-CoA dehydrogenase C-terminal domain-like"/>
    <property type="match status" value="1"/>
</dbReference>
<dbReference type="SUPFAM" id="SSF56645">
    <property type="entry name" value="Acyl-CoA dehydrogenase NM domain-like"/>
    <property type="match status" value="1"/>
</dbReference>
<dbReference type="PROSITE" id="PS00072">
    <property type="entry name" value="ACYL_COA_DH_1"/>
    <property type="match status" value="1"/>
</dbReference>
<dbReference type="PROSITE" id="PS00073">
    <property type="entry name" value="ACYL_COA_DH_2"/>
    <property type="match status" value="1"/>
</dbReference>